<sequence>MTSSYLHFPEFDPVIFSIGPVALHWYGLMYLVGFIFAMWLATRRANRPGSGWTKNEVENLLYAGFLGVFLGGRIGYVLFYNFPQFMADPLYLFRVWDGGMSFHGGLIGVIVVMIIFARRTKRSFFQVSDFIAPLIPFGLGAGRLGNFINGELWGRVDPNFPFAMLFPGSRTEDILLLQTNPQWQSIFDTYGVLPRHPSQLYELLLEGVVLFIILNLYIRKPRPMGAVSGLFLIGYGAFRIIVEFFRQPDAQFTGAWVQYISMGQILSIPMIVAGVIMMVWAYRRSPQQHVS</sequence>
<gene>
    <name evidence="1" type="primary">lgt</name>
    <name type="ordered locus">EcSMS35_2975</name>
</gene>
<protein>
    <recommendedName>
        <fullName evidence="1">Phosphatidylglycerol--prolipoprotein diacylglyceryl transferase</fullName>
        <ecNumber evidence="1">2.5.1.145</ecNumber>
    </recommendedName>
</protein>
<reference key="1">
    <citation type="journal article" date="2008" name="J. Bacteriol.">
        <title>Insights into the environmental resistance gene pool from the genome sequence of the multidrug-resistant environmental isolate Escherichia coli SMS-3-5.</title>
        <authorList>
            <person name="Fricke W.F."/>
            <person name="Wright M.S."/>
            <person name="Lindell A.H."/>
            <person name="Harkins D.M."/>
            <person name="Baker-Austin C."/>
            <person name="Ravel J."/>
            <person name="Stepanauskas R."/>
        </authorList>
    </citation>
    <scope>NUCLEOTIDE SEQUENCE [LARGE SCALE GENOMIC DNA]</scope>
    <source>
        <strain>SMS-3-5 / SECEC</strain>
    </source>
</reference>
<comment type="function">
    <text evidence="1">Catalyzes the transfer of the diacylglyceryl group from phosphatidylglycerol to the sulfhydryl group of the N-terminal cysteine of a prolipoprotein, the first step in the formation of mature lipoproteins.</text>
</comment>
<comment type="catalytic activity">
    <reaction evidence="1">
        <text>L-cysteinyl-[prolipoprotein] + a 1,2-diacyl-sn-glycero-3-phospho-(1'-sn-glycerol) = an S-1,2-diacyl-sn-glyceryl-L-cysteinyl-[prolipoprotein] + sn-glycerol 1-phosphate + H(+)</text>
        <dbReference type="Rhea" id="RHEA:56712"/>
        <dbReference type="Rhea" id="RHEA-COMP:14679"/>
        <dbReference type="Rhea" id="RHEA-COMP:14680"/>
        <dbReference type="ChEBI" id="CHEBI:15378"/>
        <dbReference type="ChEBI" id="CHEBI:29950"/>
        <dbReference type="ChEBI" id="CHEBI:57685"/>
        <dbReference type="ChEBI" id="CHEBI:64716"/>
        <dbReference type="ChEBI" id="CHEBI:140658"/>
        <dbReference type="EC" id="2.5.1.145"/>
    </reaction>
</comment>
<comment type="pathway">
    <text evidence="1">Protein modification; lipoprotein biosynthesis (diacylglyceryl transfer).</text>
</comment>
<comment type="subcellular location">
    <subcellularLocation>
        <location evidence="1">Cell inner membrane</location>
        <topology evidence="1">Multi-pass membrane protein</topology>
    </subcellularLocation>
</comment>
<comment type="similarity">
    <text evidence="1">Belongs to the Lgt family.</text>
</comment>
<organism>
    <name type="scientific">Escherichia coli (strain SMS-3-5 / SECEC)</name>
    <dbReference type="NCBI Taxonomy" id="439855"/>
    <lineage>
        <taxon>Bacteria</taxon>
        <taxon>Pseudomonadati</taxon>
        <taxon>Pseudomonadota</taxon>
        <taxon>Gammaproteobacteria</taxon>
        <taxon>Enterobacterales</taxon>
        <taxon>Enterobacteriaceae</taxon>
        <taxon>Escherichia</taxon>
    </lineage>
</organism>
<evidence type="ECO:0000255" key="1">
    <source>
        <dbReference type="HAMAP-Rule" id="MF_01147"/>
    </source>
</evidence>
<proteinExistence type="inferred from homology"/>
<keyword id="KW-0997">Cell inner membrane</keyword>
<keyword id="KW-1003">Cell membrane</keyword>
<keyword id="KW-0472">Membrane</keyword>
<keyword id="KW-0808">Transferase</keyword>
<keyword id="KW-0812">Transmembrane</keyword>
<keyword id="KW-1133">Transmembrane helix</keyword>
<name>LGT_ECOSM</name>
<feature type="chain" id="PRO_1000137427" description="Phosphatidylglycerol--prolipoprotein diacylglyceryl transferase">
    <location>
        <begin position="1"/>
        <end position="291"/>
    </location>
</feature>
<feature type="transmembrane region" description="Helical" evidence="1">
    <location>
        <begin position="21"/>
        <end position="41"/>
    </location>
</feature>
<feature type="transmembrane region" description="Helical" evidence="1">
    <location>
        <begin position="60"/>
        <end position="80"/>
    </location>
</feature>
<feature type="transmembrane region" description="Helical" evidence="1">
    <location>
        <begin position="96"/>
        <end position="116"/>
    </location>
</feature>
<feature type="transmembrane region" description="Helical" evidence="1">
    <location>
        <begin position="225"/>
        <end position="245"/>
    </location>
</feature>
<feature type="transmembrane region" description="Helical" evidence="1">
    <location>
        <begin position="260"/>
        <end position="280"/>
    </location>
</feature>
<feature type="binding site" evidence="1">
    <location>
        <position position="143"/>
    </location>
    <ligand>
        <name>a 1,2-diacyl-sn-glycero-3-phospho-(1'-sn-glycerol)</name>
        <dbReference type="ChEBI" id="CHEBI:64716"/>
    </ligand>
</feature>
<accession>B1LR25</accession>
<dbReference type="EC" id="2.5.1.145" evidence="1"/>
<dbReference type="EMBL" id="CP000970">
    <property type="protein sequence ID" value="ACB19713.1"/>
    <property type="molecule type" value="Genomic_DNA"/>
</dbReference>
<dbReference type="RefSeq" id="WP_000204658.1">
    <property type="nucleotide sequence ID" value="NC_010498.1"/>
</dbReference>
<dbReference type="SMR" id="B1LR25"/>
<dbReference type="GeneID" id="93779170"/>
<dbReference type="KEGG" id="ecm:EcSMS35_2975"/>
<dbReference type="HOGENOM" id="CLU_013386_1_0_6"/>
<dbReference type="UniPathway" id="UPA00664"/>
<dbReference type="Proteomes" id="UP000007011">
    <property type="component" value="Chromosome"/>
</dbReference>
<dbReference type="GO" id="GO:0005886">
    <property type="term" value="C:plasma membrane"/>
    <property type="evidence" value="ECO:0007669"/>
    <property type="project" value="UniProtKB-SubCell"/>
</dbReference>
<dbReference type="GO" id="GO:0008961">
    <property type="term" value="F:phosphatidylglycerol-prolipoprotein diacylglyceryl transferase activity"/>
    <property type="evidence" value="ECO:0007669"/>
    <property type="project" value="UniProtKB-UniRule"/>
</dbReference>
<dbReference type="GO" id="GO:0042158">
    <property type="term" value="P:lipoprotein biosynthetic process"/>
    <property type="evidence" value="ECO:0007669"/>
    <property type="project" value="UniProtKB-UniRule"/>
</dbReference>
<dbReference type="HAMAP" id="MF_01147">
    <property type="entry name" value="Lgt"/>
    <property type="match status" value="1"/>
</dbReference>
<dbReference type="InterPro" id="IPR001640">
    <property type="entry name" value="Lgt"/>
</dbReference>
<dbReference type="NCBIfam" id="TIGR00544">
    <property type="entry name" value="lgt"/>
    <property type="match status" value="1"/>
</dbReference>
<dbReference type="PANTHER" id="PTHR30589:SF0">
    <property type="entry name" value="PHOSPHATIDYLGLYCEROL--PROLIPOPROTEIN DIACYLGLYCERYL TRANSFERASE"/>
    <property type="match status" value="1"/>
</dbReference>
<dbReference type="PANTHER" id="PTHR30589">
    <property type="entry name" value="PROLIPOPROTEIN DIACYLGLYCERYL TRANSFERASE"/>
    <property type="match status" value="1"/>
</dbReference>
<dbReference type="Pfam" id="PF01790">
    <property type="entry name" value="LGT"/>
    <property type="match status" value="1"/>
</dbReference>
<dbReference type="PROSITE" id="PS01311">
    <property type="entry name" value="LGT"/>
    <property type="match status" value="1"/>
</dbReference>